<gene>
    <name evidence="1" type="primary">yjhX2</name>
    <name type="ordered locus">STY4857</name>
    <name type="ordered locus">t4551</name>
</gene>
<comment type="similarity">
    <text evidence="1">Belongs to the UPF0386 family.</text>
</comment>
<dbReference type="EMBL" id="AL513382">
    <property type="protein sequence ID" value="CAD06976.1"/>
    <property type="molecule type" value="Genomic_DNA"/>
</dbReference>
<dbReference type="EMBL" id="AE014613">
    <property type="protein sequence ID" value="AAO71989.1"/>
    <property type="molecule type" value="Genomic_DNA"/>
</dbReference>
<dbReference type="RefSeq" id="NP_458926.1">
    <property type="nucleotide sequence ID" value="NC_003198.1"/>
</dbReference>
<dbReference type="RefSeq" id="WP_001054380.1">
    <property type="nucleotide sequence ID" value="NZ_WSUR01000016.1"/>
</dbReference>
<dbReference type="STRING" id="220341.gene:17588677"/>
<dbReference type="KEGG" id="stt:t4551"/>
<dbReference type="KEGG" id="sty:STY4857"/>
<dbReference type="PATRIC" id="fig|220341.7.peg.4972"/>
<dbReference type="eggNOG" id="COG3811">
    <property type="taxonomic scope" value="Bacteria"/>
</dbReference>
<dbReference type="HOGENOM" id="CLU_164736_0_0_6"/>
<dbReference type="OMA" id="HPYRITE"/>
<dbReference type="OrthoDB" id="7204880at2"/>
<dbReference type="Proteomes" id="UP000000541">
    <property type="component" value="Chromosome"/>
</dbReference>
<dbReference type="Proteomes" id="UP000002670">
    <property type="component" value="Chromosome"/>
</dbReference>
<dbReference type="HAMAP" id="MF_00827">
    <property type="entry name" value="UPF0386"/>
    <property type="match status" value="1"/>
</dbReference>
<dbReference type="InterPro" id="IPR018654">
    <property type="entry name" value="YjhX_toxin"/>
</dbReference>
<dbReference type="NCBIfam" id="NF010240">
    <property type="entry name" value="PRK13687.1"/>
    <property type="match status" value="1"/>
</dbReference>
<dbReference type="Pfam" id="PF09857">
    <property type="entry name" value="YjhX_toxin"/>
    <property type="match status" value="1"/>
</dbReference>
<organism>
    <name type="scientific">Salmonella typhi</name>
    <dbReference type="NCBI Taxonomy" id="90370"/>
    <lineage>
        <taxon>Bacteria</taxon>
        <taxon>Pseudomonadati</taxon>
        <taxon>Pseudomonadota</taxon>
        <taxon>Gammaproteobacteria</taxon>
        <taxon>Enterobacterales</taxon>
        <taxon>Enterobacteriaceae</taxon>
        <taxon>Salmonella</taxon>
    </lineage>
</organism>
<sequence>MNLSRQEQRTLHVLAKGGRITHIRDASGRVTAVECYSREGLLLADCTLAVFKKLKTKKLIKSVNGQPYRINTTGLNNVRAQPDNR</sequence>
<evidence type="ECO:0000255" key="1">
    <source>
        <dbReference type="HAMAP-Rule" id="MF_00827"/>
    </source>
</evidence>
<proteinExistence type="inferred from homology"/>
<protein>
    <recommendedName>
        <fullName evidence="1">UPF0386 protein YjhX 2</fullName>
    </recommendedName>
</protein>
<name>YJHX2_SALTI</name>
<accession>Q8XF41</accession>
<accession>Q7ALN5</accession>
<reference key="1">
    <citation type="journal article" date="2001" name="Nature">
        <title>Complete genome sequence of a multiple drug resistant Salmonella enterica serovar Typhi CT18.</title>
        <authorList>
            <person name="Parkhill J."/>
            <person name="Dougan G."/>
            <person name="James K.D."/>
            <person name="Thomson N.R."/>
            <person name="Pickard D."/>
            <person name="Wain J."/>
            <person name="Churcher C.M."/>
            <person name="Mungall K.L."/>
            <person name="Bentley S.D."/>
            <person name="Holden M.T.G."/>
            <person name="Sebaihia M."/>
            <person name="Baker S."/>
            <person name="Basham D."/>
            <person name="Brooks K."/>
            <person name="Chillingworth T."/>
            <person name="Connerton P."/>
            <person name="Cronin A."/>
            <person name="Davis P."/>
            <person name="Davies R.M."/>
            <person name="Dowd L."/>
            <person name="White N."/>
            <person name="Farrar J."/>
            <person name="Feltwell T."/>
            <person name="Hamlin N."/>
            <person name="Haque A."/>
            <person name="Hien T.T."/>
            <person name="Holroyd S."/>
            <person name="Jagels K."/>
            <person name="Krogh A."/>
            <person name="Larsen T.S."/>
            <person name="Leather S."/>
            <person name="Moule S."/>
            <person name="O'Gaora P."/>
            <person name="Parry C."/>
            <person name="Quail M.A."/>
            <person name="Rutherford K.M."/>
            <person name="Simmonds M."/>
            <person name="Skelton J."/>
            <person name="Stevens K."/>
            <person name="Whitehead S."/>
            <person name="Barrell B.G."/>
        </authorList>
    </citation>
    <scope>NUCLEOTIDE SEQUENCE [LARGE SCALE GENOMIC DNA]</scope>
    <source>
        <strain>CT18</strain>
    </source>
</reference>
<reference key="2">
    <citation type="journal article" date="2003" name="J. Bacteriol.">
        <title>Comparative genomics of Salmonella enterica serovar Typhi strains Ty2 and CT18.</title>
        <authorList>
            <person name="Deng W."/>
            <person name="Liou S.-R."/>
            <person name="Plunkett G. III"/>
            <person name="Mayhew G.F."/>
            <person name="Rose D.J."/>
            <person name="Burland V."/>
            <person name="Kodoyianni V."/>
            <person name="Schwartz D.C."/>
            <person name="Blattner F.R."/>
        </authorList>
    </citation>
    <scope>NUCLEOTIDE SEQUENCE [LARGE SCALE GENOMIC DNA]</scope>
    <source>
        <strain>ATCC 700931 / Ty2</strain>
    </source>
</reference>
<feature type="chain" id="PRO_0000252190" description="UPF0386 protein YjhX 2">
    <location>
        <begin position="1"/>
        <end position="85"/>
    </location>
</feature>